<dbReference type="EC" id="2.4.2.26" evidence="1"/>
<dbReference type="EMBL" id="AJ866724">
    <property type="protein sequence ID" value="CAI28927.1"/>
    <property type="molecule type" value="mRNA"/>
</dbReference>
<dbReference type="RefSeq" id="NP_001009086.1">
    <property type="nucleotide sequence ID" value="NM_001009086.1"/>
</dbReference>
<dbReference type="SMR" id="Q5QQ51"/>
<dbReference type="FunCoup" id="Q5QQ51">
    <property type="interactions" value="749"/>
</dbReference>
<dbReference type="STRING" id="9598.ENSPTRP00000054327"/>
<dbReference type="CAZy" id="GT14">
    <property type="family name" value="Glycosyltransferase Family 14"/>
</dbReference>
<dbReference type="GlyCosmos" id="Q5QQ51">
    <property type="glycosylation" value="3 sites, No reported glycans"/>
</dbReference>
<dbReference type="PaxDb" id="9598-ENSPTRP00000054327"/>
<dbReference type="GeneID" id="455118"/>
<dbReference type="KEGG" id="ptr:455118"/>
<dbReference type="CTD" id="64132"/>
<dbReference type="eggNOG" id="KOG0799">
    <property type="taxonomic scope" value="Eukaryota"/>
</dbReference>
<dbReference type="InParanoid" id="Q5QQ51"/>
<dbReference type="OrthoDB" id="4856at9604"/>
<dbReference type="UniPathway" id="UPA00755"/>
<dbReference type="UniPathway" id="UPA00756"/>
<dbReference type="Proteomes" id="UP000002277">
    <property type="component" value="Unplaced"/>
</dbReference>
<dbReference type="GO" id="GO:0005615">
    <property type="term" value="C:extracellular space"/>
    <property type="evidence" value="ECO:0000250"/>
    <property type="project" value="UniProtKB"/>
</dbReference>
<dbReference type="GO" id="GO:0000139">
    <property type="term" value="C:Golgi membrane"/>
    <property type="evidence" value="ECO:0007669"/>
    <property type="project" value="UniProtKB-SubCell"/>
</dbReference>
<dbReference type="GO" id="GO:0000287">
    <property type="term" value="F:magnesium ion binding"/>
    <property type="evidence" value="ECO:0000250"/>
    <property type="project" value="UniProtKB"/>
</dbReference>
<dbReference type="GO" id="GO:0030145">
    <property type="term" value="F:manganese ion binding"/>
    <property type="evidence" value="ECO:0000250"/>
    <property type="project" value="UniProtKB"/>
</dbReference>
<dbReference type="GO" id="GO:0030158">
    <property type="term" value="F:protein xylosyltransferase activity"/>
    <property type="evidence" value="ECO:0000250"/>
    <property type="project" value="UniProtKB"/>
</dbReference>
<dbReference type="GO" id="GO:0050650">
    <property type="term" value="P:chondroitin sulfate proteoglycan biosynthetic process"/>
    <property type="evidence" value="ECO:0000250"/>
    <property type="project" value="UniProtKB"/>
</dbReference>
<dbReference type="GO" id="GO:0015012">
    <property type="term" value="P:heparan sulfate proteoglycan biosynthetic process"/>
    <property type="evidence" value="ECO:0000250"/>
    <property type="project" value="UniProtKB"/>
</dbReference>
<dbReference type="InterPro" id="IPR003406">
    <property type="entry name" value="Glyco_trans_14"/>
</dbReference>
<dbReference type="InterPro" id="IPR043538">
    <property type="entry name" value="XYLT"/>
</dbReference>
<dbReference type="InterPro" id="IPR024448">
    <property type="entry name" value="XylT_C"/>
</dbReference>
<dbReference type="PANTHER" id="PTHR46025:SF1">
    <property type="entry name" value="XYLOSYLTRANSFERASE 2"/>
    <property type="match status" value="1"/>
</dbReference>
<dbReference type="PANTHER" id="PTHR46025">
    <property type="entry name" value="XYLOSYLTRANSFERASE OXT"/>
    <property type="match status" value="1"/>
</dbReference>
<dbReference type="Pfam" id="PF02485">
    <property type="entry name" value="Branch"/>
    <property type="match status" value="1"/>
</dbReference>
<dbReference type="Pfam" id="PF12529">
    <property type="entry name" value="Xylo_C"/>
    <property type="match status" value="1"/>
</dbReference>
<name>XYLT2_PANTR</name>
<evidence type="ECO:0000250" key="1">
    <source>
        <dbReference type="UniProtKB" id="Q86Y38"/>
    </source>
</evidence>
<evidence type="ECO:0000250" key="2">
    <source>
        <dbReference type="UniProtKB" id="Q9EPL0"/>
    </source>
</evidence>
<evidence type="ECO:0000250" key="3">
    <source>
        <dbReference type="UniProtKB" id="Q9H1B5"/>
    </source>
</evidence>
<evidence type="ECO:0000255" key="4"/>
<evidence type="ECO:0000256" key="5">
    <source>
        <dbReference type="SAM" id="MobiDB-lite"/>
    </source>
</evidence>
<evidence type="ECO:0000305" key="6"/>
<comment type="function">
    <text evidence="2 3">Catalyzes the first step in the biosynthesis of chondroitin sulfate, heparan sulfate and dermatan sulfate proteoglycans, such as DCN (By similarity). Transfers D-xylose from UDP-D-xylose to specific serine residues of the core protein (By similarity).</text>
</comment>
<comment type="catalytic activity">
    <reaction evidence="3">
        <text>UDP-alpha-D-xylose + L-seryl-[protein] = 3-O-(beta-D-xylosyl)-L-seryl-[protein] + UDP + H(+)</text>
        <dbReference type="Rhea" id="RHEA:50192"/>
        <dbReference type="Rhea" id="RHEA-COMP:9863"/>
        <dbReference type="Rhea" id="RHEA-COMP:12567"/>
        <dbReference type="ChEBI" id="CHEBI:15378"/>
        <dbReference type="ChEBI" id="CHEBI:29999"/>
        <dbReference type="ChEBI" id="CHEBI:57632"/>
        <dbReference type="ChEBI" id="CHEBI:58223"/>
        <dbReference type="ChEBI" id="CHEBI:132085"/>
        <dbReference type="EC" id="2.4.2.26"/>
    </reaction>
</comment>
<comment type="cofactor">
    <cofactor evidence="3">
        <name>Mg(2+)</name>
        <dbReference type="ChEBI" id="CHEBI:18420"/>
    </cofactor>
    <cofactor evidence="3">
        <name>Mn(2+)</name>
        <dbReference type="ChEBI" id="CHEBI:29035"/>
    </cofactor>
    <text evidence="3">Active with either Mg(2+) or Mn(2+), but activity is highest when both are present.</text>
</comment>
<comment type="pathway">
    <text evidence="3">Glycan metabolism; chondroitin sulfate biosynthesis.</text>
</comment>
<comment type="pathway">
    <text evidence="3">Glycan metabolism; heparan sulfate biosynthesis.</text>
</comment>
<comment type="subunit">
    <text evidence="1">Monomer.</text>
</comment>
<comment type="subcellular location">
    <subcellularLocation>
        <location evidence="3">Golgi apparatus membrane</location>
        <topology evidence="3">Single-pass type II membrane protein</topology>
    </subcellularLocation>
    <subcellularLocation>
        <location evidence="3">Secreted</location>
    </subcellularLocation>
</comment>
<comment type="PTM">
    <text evidence="1">Contains disulfide bonds.</text>
</comment>
<comment type="similarity">
    <text evidence="6">Belongs to the glycosyltransferase 14 family. XylT subfamily.</text>
</comment>
<proteinExistence type="evidence at transcript level"/>
<organism>
    <name type="scientific">Pan troglodytes</name>
    <name type="common">Chimpanzee</name>
    <dbReference type="NCBI Taxonomy" id="9598"/>
    <lineage>
        <taxon>Eukaryota</taxon>
        <taxon>Metazoa</taxon>
        <taxon>Chordata</taxon>
        <taxon>Craniata</taxon>
        <taxon>Vertebrata</taxon>
        <taxon>Euteleostomi</taxon>
        <taxon>Mammalia</taxon>
        <taxon>Eutheria</taxon>
        <taxon>Euarchontoglires</taxon>
        <taxon>Primates</taxon>
        <taxon>Haplorrhini</taxon>
        <taxon>Catarrhini</taxon>
        <taxon>Hominidae</taxon>
        <taxon>Pan</taxon>
    </lineage>
</organism>
<reference key="1">
    <citation type="submission" date="2004-11" db="EMBL/GenBank/DDBJ databases">
        <title>Phylogeny of animal protein xylosyltransferases.</title>
        <authorList>
            <person name="Ouzzine M."/>
            <person name="Fournel-Gigleux S."/>
            <person name="Mollicone R."/>
            <person name="Oriol R."/>
        </authorList>
    </citation>
    <scope>NUCLEOTIDE SEQUENCE [MRNA]</scope>
</reference>
<gene>
    <name type="primary">XYLT2</name>
</gene>
<accession>Q5QQ51</accession>
<keyword id="KW-1015">Disulfide bond</keyword>
<keyword id="KW-0325">Glycoprotein</keyword>
<keyword id="KW-0328">Glycosyltransferase</keyword>
<keyword id="KW-0333">Golgi apparatus</keyword>
<keyword id="KW-0460">Magnesium</keyword>
<keyword id="KW-0464">Manganese</keyword>
<keyword id="KW-0472">Membrane</keyword>
<keyword id="KW-0479">Metal-binding</keyword>
<keyword id="KW-1185">Reference proteome</keyword>
<keyword id="KW-0964">Secreted</keyword>
<keyword id="KW-0735">Signal-anchor</keyword>
<keyword id="KW-0808">Transferase</keyword>
<keyword id="KW-0812">Transmembrane</keyword>
<keyword id="KW-1133">Transmembrane helix</keyword>
<protein>
    <recommendedName>
        <fullName>Xylosyltransferase 2</fullName>
        <ecNumber evidence="1">2.4.2.26</ecNumber>
    </recommendedName>
    <alternativeName>
        <fullName>Peptide O-xylosyltransferase 2</fullName>
    </alternativeName>
    <alternativeName>
        <fullName>Xylosyltransferase II</fullName>
    </alternativeName>
</protein>
<sequence length="865" mass="96713">MVASARVQKLVRRYKLAIATALAILLLQGLVVWSFSGLEEDEAGEKGRQRKPRPLDPGEGSKDTDSSAGRRGSTGRRHGRWRGRAESPGVPVAKVVRAVTSRQRASRRVPPAPPPEAPGRQNLSGAAAGEALVGAAGFPPHGDTGSVEGAPQPTDNGFTPKCEIVGKDALSALARASTKQCQQEIANVVCLHQAGSLMPKAVPRHCQLTGKMSPGIQWDESQAQQPMDGPPVRIAYMLVVHGRAIRQLKRLLKAVYHEQHFFYIHVDKRSNYLHREVVELAQGYDNVRVTPWRMVTIWGGASLLTMYLRSMRDLLEVPGWAWDFFINLSATDYPTRTNEELVAFLSKNRDKNFLKSHGRDNSRFIKKQGLDRLFHECDSHMWRLGERQIPAGIVVDGGSDWFVLTRSFVEYVVYTDDPLVAQLRQFYTYTLLPAESFFHTVLENSLACETLVDNNLRVTNWNRKLGCKCQYKHIVDWCGCSPNDFKPQDFLRLQQVSRPTFFARKFESTVNQEVLEILDFHLYGSYPPGTPALKAYWENTYDAADGPSGLSDVMLTAYTAFARLSLHHAATAAPPMGTPLCRFEPRGLPSSVHLYFYDDHFQGYLVTQAAQPSAQGPAEMLEMWLMPQGSLKLLGRSDQASRLQSLEVGTDWDPKERLFRNFGGLLGPLDEPVAVQRWARGPNLTATVVWIDPTYVVATSYDITVDTETEVTQYKPPLSRPLRPGPWTVRLLQFWEPLGETRFLVLPLTFNRKLPLRKDDASWLHAGPPHNEYMEQSFQGLSSILNLPQPELAEEAAQRHTQLTGPALEAWTDRELSSFWSVAGLCAIGPSPCPSLEPCRLTSWSSLSPDPKSELGPVKADGRLR</sequence>
<feature type="chain" id="PRO_0000191408" description="Xylosyltransferase 2">
    <location>
        <begin position="1"/>
        <end position="865"/>
    </location>
</feature>
<feature type="topological domain" description="Cytoplasmic" evidence="4">
    <location>
        <begin position="1"/>
        <end position="15"/>
    </location>
</feature>
<feature type="transmembrane region" description="Helical; Signal-anchor for type II membrane protein" evidence="4">
    <location>
        <begin position="16"/>
        <end position="36"/>
    </location>
</feature>
<feature type="topological domain" description="Lumenal" evidence="4">
    <location>
        <begin position="37"/>
        <end position="865"/>
    </location>
</feature>
<feature type="region of interest" description="Disordered" evidence="5">
    <location>
        <begin position="41"/>
        <end position="157"/>
    </location>
</feature>
<feature type="region of interest" description="Disordered" evidence="5">
    <location>
        <begin position="846"/>
        <end position="865"/>
    </location>
</feature>
<feature type="compositionally biased region" description="Basic and acidic residues" evidence="5">
    <location>
        <begin position="53"/>
        <end position="65"/>
    </location>
</feature>
<feature type="compositionally biased region" description="Basic residues" evidence="5">
    <location>
        <begin position="73"/>
        <end position="82"/>
    </location>
</feature>
<feature type="compositionally biased region" description="Low complexity" evidence="5">
    <location>
        <begin position="125"/>
        <end position="137"/>
    </location>
</feature>
<feature type="binding site" evidence="1">
    <location>
        <position position="239"/>
    </location>
    <ligand>
        <name>UDP-alpha-D-xylose</name>
        <dbReference type="ChEBI" id="CHEBI:57632"/>
    </ligand>
</feature>
<feature type="binding site" evidence="1">
    <location>
        <position position="267"/>
    </location>
    <ligand>
        <name>UDP-alpha-D-xylose</name>
        <dbReference type="ChEBI" id="CHEBI:57632"/>
    </ligand>
</feature>
<feature type="binding site" evidence="1">
    <location>
        <begin position="296"/>
        <end position="298"/>
    </location>
    <ligand>
        <name>UDP-alpha-D-xylose</name>
        <dbReference type="ChEBI" id="CHEBI:57632"/>
    </ligand>
</feature>
<feature type="binding site" evidence="1">
    <location>
        <begin position="400"/>
        <end position="401"/>
    </location>
    <ligand>
        <name>UDP-alpha-D-xylose</name>
        <dbReference type="ChEBI" id="CHEBI:57632"/>
    </ligand>
</feature>
<feature type="binding site" evidence="1">
    <location>
        <position position="481"/>
    </location>
    <ligand>
        <name>UDP-alpha-D-xylose</name>
        <dbReference type="ChEBI" id="CHEBI:57632"/>
    </ligand>
</feature>
<feature type="binding site" evidence="1">
    <location>
        <begin position="504"/>
        <end position="505"/>
    </location>
    <ligand>
        <name>UDP-alpha-D-xylose</name>
        <dbReference type="ChEBI" id="CHEBI:57632"/>
    </ligand>
</feature>
<feature type="glycosylation site" description="N-linked (GlcNAc...) asparagine" evidence="4">
    <location>
        <position position="122"/>
    </location>
</feature>
<feature type="glycosylation site" description="N-linked (GlcNAc...) asparagine" evidence="4">
    <location>
        <position position="327"/>
    </location>
</feature>
<feature type="glycosylation site" description="N-linked (GlcNAc...) asparagine" evidence="4">
    <location>
        <position position="683"/>
    </location>
</feature>
<feature type="disulfide bond" evidence="1">
    <location>
        <begin position="162"/>
        <end position="190"/>
    </location>
</feature>
<feature type="disulfide bond" evidence="1">
    <location>
        <begin position="206"/>
        <end position="448"/>
    </location>
</feature>
<feature type="disulfide bond" evidence="1">
    <location>
        <begin position="467"/>
        <end position="480"/>
    </location>
</feature>
<feature type="disulfide bond" evidence="1">
    <location>
        <begin position="469"/>
        <end position="478"/>
    </location>
</feature>
<feature type="disulfide bond" evidence="1">
    <location>
        <begin position="581"/>
        <end position="833"/>
    </location>
</feature>
<feature type="disulfide bond" evidence="1">
    <location>
        <begin position="826"/>
        <end position="839"/>
    </location>
</feature>